<protein>
    <recommendedName>
        <fullName evidence="1">MEMO1 family protein M1425_2054</fullName>
    </recommendedName>
</protein>
<accession>C3MZ11</accession>
<dbReference type="EMBL" id="CP001400">
    <property type="protein sequence ID" value="ACP38795.1"/>
    <property type="molecule type" value="Genomic_DNA"/>
</dbReference>
<dbReference type="SMR" id="C3MZ11"/>
<dbReference type="KEGG" id="sia:M1425_2054"/>
<dbReference type="HOGENOM" id="CLU_038085_2_0_2"/>
<dbReference type="Proteomes" id="UP000001350">
    <property type="component" value="Chromosome"/>
</dbReference>
<dbReference type="CDD" id="cd07361">
    <property type="entry name" value="MEMO_like"/>
    <property type="match status" value="1"/>
</dbReference>
<dbReference type="Gene3D" id="3.40.830.10">
    <property type="entry name" value="LigB-like"/>
    <property type="match status" value="1"/>
</dbReference>
<dbReference type="HAMAP" id="MF_00055">
    <property type="entry name" value="MEMO1"/>
    <property type="match status" value="1"/>
</dbReference>
<dbReference type="InterPro" id="IPR002737">
    <property type="entry name" value="MEMO1_fam"/>
</dbReference>
<dbReference type="NCBIfam" id="TIGR04336">
    <property type="entry name" value="AmmeMemoSam_B"/>
    <property type="match status" value="1"/>
</dbReference>
<dbReference type="PANTHER" id="PTHR11060">
    <property type="entry name" value="PROTEIN MEMO1"/>
    <property type="match status" value="1"/>
</dbReference>
<dbReference type="PANTHER" id="PTHR11060:SF0">
    <property type="entry name" value="PROTEIN MEMO1"/>
    <property type="match status" value="1"/>
</dbReference>
<dbReference type="Pfam" id="PF01875">
    <property type="entry name" value="Memo"/>
    <property type="match status" value="1"/>
</dbReference>
<reference key="1">
    <citation type="journal article" date="2009" name="Proc. Natl. Acad. Sci. U.S.A.">
        <title>Biogeography of the Sulfolobus islandicus pan-genome.</title>
        <authorList>
            <person name="Reno M.L."/>
            <person name="Held N.L."/>
            <person name="Fields C.J."/>
            <person name="Burke P.V."/>
            <person name="Whitaker R.J."/>
        </authorList>
    </citation>
    <scope>NUCLEOTIDE SEQUENCE [LARGE SCALE GENOMIC DNA]</scope>
    <source>
        <strain>M.14.25 / Kamchatka #1</strain>
    </source>
</reference>
<gene>
    <name type="ordered locus">M1425_2054</name>
</gene>
<proteinExistence type="inferred from homology"/>
<sequence length="284" mass="32198">MKRLPAVAGSFYESDPKKLKMQIEWSFRHNIGPRDIPKQTYEKKKRDNLFFVVPHAGYIYSGPVAAHSYYYLVSEGRPDVVIILGPNHTGLGSYVSAWPKGEWETPLGSVKIDEEILMQLVKESEVIDLDEKSHLYEHSIEVQLPFLQYFFDDDFKIVPIVIMMQTPEIAEFLADAIYNVMQKNPDKDIVVLASSDMNHYDPHEITVKKDEEAIEKIQQLDYKGLYEVVEGKDVTLCGYGPIMVNLILAKKFGKKAYILKHATSGDTSGPKDSVVGYLAARFGS</sequence>
<organism>
    <name type="scientific">Saccharolobus islandicus (strain M.14.25 / Kamchatka #1)</name>
    <name type="common">Sulfolobus islandicus</name>
    <dbReference type="NCBI Taxonomy" id="427317"/>
    <lineage>
        <taxon>Archaea</taxon>
        <taxon>Thermoproteota</taxon>
        <taxon>Thermoprotei</taxon>
        <taxon>Sulfolobales</taxon>
        <taxon>Sulfolobaceae</taxon>
        <taxon>Saccharolobus</taxon>
    </lineage>
</organism>
<evidence type="ECO:0000255" key="1">
    <source>
        <dbReference type="HAMAP-Rule" id="MF_00055"/>
    </source>
</evidence>
<feature type="chain" id="PRO_1000202327" description="MEMO1 family protein M1425_2054">
    <location>
        <begin position="1"/>
        <end position="284"/>
    </location>
</feature>
<comment type="similarity">
    <text evidence="1">Belongs to the MEMO1 family.</text>
</comment>
<name>Y2054_SACI4</name>